<dbReference type="EMBL" id="AAFI02000005">
    <property type="protein sequence ID" value="EAL71992.1"/>
    <property type="molecule type" value="Genomic_DNA"/>
</dbReference>
<dbReference type="RefSeq" id="XP_645847.1">
    <property type="nucleotide sequence ID" value="XM_640755.1"/>
</dbReference>
<dbReference type="SMR" id="Q55ED4"/>
<dbReference type="FunCoup" id="Q55ED4">
    <property type="interactions" value="470"/>
</dbReference>
<dbReference type="STRING" id="44689.Q55ED4"/>
<dbReference type="PaxDb" id="44689-DDB0190150"/>
<dbReference type="EnsemblProtists" id="EAL71992">
    <property type="protein sequence ID" value="EAL71992"/>
    <property type="gene ID" value="DDB_G0269284"/>
</dbReference>
<dbReference type="GeneID" id="8616791"/>
<dbReference type="KEGG" id="ddi:DDB_G0269284"/>
<dbReference type="dictyBase" id="DDB_G0269284">
    <property type="gene designation" value="nkaP"/>
</dbReference>
<dbReference type="VEuPathDB" id="AmoebaDB:DDB_G0269284"/>
<dbReference type="eggNOG" id="KOG2812">
    <property type="taxonomic scope" value="Eukaryota"/>
</dbReference>
<dbReference type="HOGENOM" id="CLU_534667_0_0_1"/>
<dbReference type="InParanoid" id="Q55ED4"/>
<dbReference type="OMA" id="MMPGEAD"/>
<dbReference type="Reactome" id="R-DDI-72163">
    <property type="pathway name" value="mRNA Splicing - Major Pathway"/>
</dbReference>
<dbReference type="PRO" id="PR:Q55ED4"/>
<dbReference type="Proteomes" id="UP000002195">
    <property type="component" value="Chromosome 1"/>
</dbReference>
<dbReference type="GO" id="GO:0005737">
    <property type="term" value="C:cytoplasm"/>
    <property type="evidence" value="ECO:0000314"/>
    <property type="project" value="dictyBase"/>
</dbReference>
<dbReference type="GO" id="GO:0005634">
    <property type="term" value="C:nucleus"/>
    <property type="evidence" value="ECO:0000314"/>
    <property type="project" value="dictyBase"/>
</dbReference>
<dbReference type="GO" id="GO:0003682">
    <property type="term" value="F:chromatin binding"/>
    <property type="evidence" value="ECO:0007669"/>
    <property type="project" value="InterPro"/>
</dbReference>
<dbReference type="GO" id="GO:0003729">
    <property type="term" value="F:mRNA binding"/>
    <property type="evidence" value="ECO:0000314"/>
    <property type="project" value="dictyBase"/>
</dbReference>
<dbReference type="GO" id="GO:0019843">
    <property type="term" value="F:rRNA binding"/>
    <property type="evidence" value="ECO:0000314"/>
    <property type="project" value="dictyBase"/>
</dbReference>
<dbReference type="GO" id="GO:0030515">
    <property type="term" value="F:snoRNA binding"/>
    <property type="evidence" value="ECO:0000314"/>
    <property type="project" value="dictyBase"/>
</dbReference>
<dbReference type="GO" id="GO:0017069">
    <property type="term" value="F:snRNA binding"/>
    <property type="evidence" value="ECO:0000314"/>
    <property type="project" value="dictyBase"/>
</dbReference>
<dbReference type="GO" id="GO:0010468">
    <property type="term" value="P:regulation of gene expression"/>
    <property type="evidence" value="ECO:0000315"/>
    <property type="project" value="dictyBase"/>
</dbReference>
<dbReference type="InterPro" id="IPR040466">
    <property type="entry name" value="NKAP"/>
</dbReference>
<dbReference type="InterPro" id="IPR009269">
    <property type="entry name" value="NKAP_C"/>
</dbReference>
<dbReference type="PANTHER" id="PTHR13087">
    <property type="entry name" value="NF-KAPPA B ACTIVATING PROTEIN"/>
    <property type="match status" value="1"/>
</dbReference>
<dbReference type="PANTHER" id="PTHR13087:SF0">
    <property type="entry name" value="NFKB ACTIVATING PROTEIN LIKE"/>
    <property type="match status" value="1"/>
</dbReference>
<dbReference type="Pfam" id="PF06047">
    <property type="entry name" value="Nkap_C"/>
    <property type="match status" value="1"/>
</dbReference>
<feature type="chain" id="PRO_0000372659" description="NKAP family protein">
    <location>
        <begin position="1"/>
        <end position="510"/>
    </location>
</feature>
<feature type="region of interest" description="Disordered" evidence="1">
    <location>
        <begin position="1"/>
        <end position="128"/>
    </location>
</feature>
<feature type="region of interest" description="Disordered" evidence="1">
    <location>
        <begin position="149"/>
        <end position="220"/>
    </location>
</feature>
<feature type="region of interest" description="Disordered" evidence="1">
    <location>
        <begin position="239"/>
        <end position="401"/>
    </location>
</feature>
<feature type="compositionally biased region" description="Basic and acidic residues" evidence="1">
    <location>
        <begin position="1"/>
        <end position="22"/>
    </location>
</feature>
<feature type="compositionally biased region" description="Basic residues" evidence="1">
    <location>
        <begin position="23"/>
        <end position="39"/>
    </location>
</feature>
<feature type="compositionally biased region" description="Basic and acidic residues" evidence="1">
    <location>
        <begin position="40"/>
        <end position="89"/>
    </location>
</feature>
<feature type="compositionally biased region" description="Gly residues" evidence="1">
    <location>
        <begin position="96"/>
        <end position="105"/>
    </location>
</feature>
<feature type="compositionally biased region" description="Low complexity" evidence="1">
    <location>
        <begin position="112"/>
        <end position="123"/>
    </location>
</feature>
<feature type="compositionally biased region" description="Low complexity" evidence="1">
    <location>
        <begin position="184"/>
        <end position="219"/>
    </location>
</feature>
<feature type="compositionally biased region" description="Basic residues" evidence="1">
    <location>
        <begin position="262"/>
        <end position="273"/>
    </location>
</feature>
<feature type="compositionally biased region" description="Low complexity" evidence="1">
    <location>
        <begin position="274"/>
        <end position="283"/>
    </location>
</feature>
<feature type="compositionally biased region" description="Basic residues" evidence="1">
    <location>
        <begin position="292"/>
        <end position="322"/>
    </location>
</feature>
<feature type="compositionally biased region" description="Basic and acidic residues" evidence="1">
    <location>
        <begin position="342"/>
        <end position="351"/>
    </location>
</feature>
<feature type="compositionally biased region" description="Basic residues" evidence="1">
    <location>
        <begin position="352"/>
        <end position="367"/>
    </location>
</feature>
<feature type="compositionally biased region" description="Basic and acidic residues" evidence="1">
    <location>
        <begin position="368"/>
        <end position="383"/>
    </location>
</feature>
<reference key="1">
    <citation type="journal article" date="2005" name="Nature">
        <title>The genome of the social amoeba Dictyostelium discoideum.</title>
        <authorList>
            <person name="Eichinger L."/>
            <person name="Pachebat J.A."/>
            <person name="Gloeckner G."/>
            <person name="Rajandream M.A."/>
            <person name="Sucgang R."/>
            <person name="Berriman M."/>
            <person name="Song J."/>
            <person name="Olsen R."/>
            <person name="Szafranski K."/>
            <person name="Xu Q."/>
            <person name="Tunggal B."/>
            <person name="Kummerfeld S."/>
            <person name="Madera M."/>
            <person name="Konfortov B.A."/>
            <person name="Rivero F."/>
            <person name="Bankier A.T."/>
            <person name="Lehmann R."/>
            <person name="Hamlin N."/>
            <person name="Davies R."/>
            <person name="Gaudet P."/>
            <person name="Fey P."/>
            <person name="Pilcher K."/>
            <person name="Chen G."/>
            <person name="Saunders D."/>
            <person name="Sodergren E.J."/>
            <person name="Davis P."/>
            <person name="Kerhornou A."/>
            <person name="Nie X."/>
            <person name="Hall N."/>
            <person name="Anjard C."/>
            <person name="Hemphill L."/>
            <person name="Bason N."/>
            <person name="Farbrother P."/>
            <person name="Desany B."/>
            <person name="Just E."/>
            <person name="Morio T."/>
            <person name="Rost R."/>
            <person name="Churcher C.M."/>
            <person name="Cooper J."/>
            <person name="Haydock S."/>
            <person name="van Driessche N."/>
            <person name="Cronin A."/>
            <person name="Goodhead I."/>
            <person name="Muzny D.M."/>
            <person name="Mourier T."/>
            <person name="Pain A."/>
            <person name="Lu M."/>
            <person name="Harper D."/>
            <person name="Lindsay R."/>
            <person name="Hauser H."/>
            <person name="James K.D."/>
            <person name="Quiles M."/>
            <person name="Madan Babu M."/>
            <person name="Saito T."/>
            <person name="Buchrieser C."/>
            <person name="Wardroper A."/>
            <person name="Felder M."/>
            <person name="Thangavelu M."/>
            <person name="Johnson D."/>
            <person name="Knights A."/>
            <person name="Loulseged H."/>
            <person name="Mungall K.L."/>
            <person name="Oliver K."/>
            <person name="Price C."/>
            <person name="Quail M.A."/>
            <person name="Urushihara H."/>
            <person name="Hernandez J."/>
            <person name="Rabbinowitsch E."/>
            <person name="Steffen D."/>
            <person name="Sanders M."/>
            <person name="Ma J."/>
            <person name="Kohara Y."/>
            <person name="Sharp S."/>
            <person name="Simmonds M.N."/>
            <person name="Spiegler S."/>
            <person name="Tivey A."/>
            <person name="Sugano S."/>
            <person name="White B."/>
            <person name="Walker D."/>
            <person name="Woodward J.R."/>
            <person name="Winckler T."/>
            <person name="Tanaka Y."/>
            <person name="Shaulsky G."/>
            <person name="Schleicher M."/>
            <person name="Weinstock G.M."/>
            <person name="Rosenthal A."/>
            <person name="Cox E.C."/>
            <person name="Chisholm R.L."/>
            <person name="Gibbs R.A."/>
            <person name="Loomis W.F."/>
            <person name="Platzer M."/>
            <person name="Kay R.R."/>
            <person name="Williams J.G."/>
            <person name="Dear P.H."/>
            <person name="Noegel A.A."/>
            <person name="Barrell B.G."/>
            <person name="Kuspa A."/>
        </authorList>
    </citation>
    <scope>NUCLEOTIDE SEQUENCE [LARGE SCALE GENOMIC DNA]</scope>
    <source>
        <strain>AX4</strain>
    </source>
</reference>
<evidence type="ECO:0000256" key="1">
    <source>
        <dbReference type="SAM" id="MobiDB-lite"/>
    </source>
</evidence>
<evidence type="ECO:0000305" key="2"/>
<comment type="similarity">
    <text evidence="2">Belongs to the NKAP family.</text>
</comment>
<protein>
    <recommendedName>
        <fullName evidence="2">NKAP family protein</fullName>
    </recommendedName>
</protein>
<proteinExistence type="inferred from homology"/>
<gene>
    <name type="ORF">DDB_G0269284</name>
</gene>
<keyword id="KW-1185">Reference proteome</keyword>
<organism>
    <name type="scientific">Dictyostelium discoideum</name>
    <name type="common">Social amoeba</name>
    <dbReference type="NCBI Taxonomy" id="44689"/>
    <lineage>
        <taxon>Eukaryota</taxon>
        <taxon>Amoebozoa</taxon>
        <taxon>Evosea</taxon>
        <taxon>Eumycetozoa</taxon>
        <taxon>Dictyostelia</taxon>
        <taxon>Dictyosteliales</taxon>
        <taxon>Dictyosteliaceae</taxon>
        <taxon>Dictyostelium</taxon>
    </lineage>
</organism>
<sequence length="510" mass="59615">MSHRERDRDRDRDSDRDRDRNRYSRSRSRGSRSRSRSRSRSRDRNRNRDYNKDRSSNRDSYYNDRDYKKDRSSNRDRDYYDRDRNRDYKNSSSGSSSGGGGGGSGENYTVKSSSYRESNSNNSKVEIQKQENISKDYFIDNKGVNNSIERKDNIKNENNNNNSFDNRKAEFNNNSYGEKKEFDNNNNRNYHGGNSRYVNNNNNNNNNNYNNNNNKSNYNGTDFFEYRKKLREEATCFSVYERSPSPPKKGELEEIDDQFLSNKKKSKKSRRKSSSNSDSSSSDSDSDSSRSREKRKKSKSRKDKKKRKEKKKHQRKSSKRSSKYSDSDSDSDSSFSDSDYSDSDRSDSEGRSRKKRSKKRSKKRHDHHKESVHDASMWEEKVEQQTQTLSNRDIGPKPISEVQVGSYGGAMMPGEAEAIAQFVKENKRIPRRGEVGLTSEQIASFEETGYVMSGSRHRRMNAVRIRKESQVYSAEEQKALAMLNREEKAKRENRLLADFRDLINTKLQAD</sequence>
<name>NKAP_DICDI</name>
<accession>Q55ED4</accession>